<dbReference type="EC" id="2.5.1.6" evidence="5"/>
<dbReference type="EMBL" id="AB022216">
    <property type="protein sequence ID" value="BAB02743.1"/>
    <property type="molecule type" value="Genomic_DNA"/>
</dbReference>
<dbReference type="EMBL" id="CP002686">
    <property type="protein sequence ID" value="AEE75948.1"/>
    <property type="molecule type" value="Genomic_DNA"/>
</dbReference>
<dbReference type="EMBL" id="AY037214">
    <property type="protein sequence ID" value="AAK59799.1"/>
    <property type="molecule type" value="mRNA"/>
</dbReference>
<dbReference type="EMBL" id="AY120708">
    <property type="protein sequence ID" value="AAM53266.1"/>
    <property type="molecule type" value="mRNA"/>
</dbReference>
<dbReference type="EMBL" id="BT000712">
    <property type="protein sequence ID" value="AAN31855.1"/>
    <property type="molecule type" value="mRNA"/>
</dbReference>
<dbReference type="EMBL" id="BT002665">
    <property type="protein sequence ID" value="AAO11581.1"/>
    <property type="molecule type" value="mRNA"/>
</dbReference>
<dbReference type="EMBL" id="AK230129">
    <property type="protein sequence ID" value="BAF01944.1"/>
    <property type="molecule type" value="mRNA"/>
</dbReference>
<dbReference type="EMBL" id="AY087184">
    <property type="protein sequence ID" value="AAM64740.1"/>
    <property type="molecule type" value="mRNA"/>
</dbReference>
<dbReference type="RefSeq" id="NP_188365.1">
    <property type="nucleotide sequence ID" value="NM_112618.4"/>
</dbReference>
<dbReference type="SMR" id="Q9LUT2"/>
<dbReference type="BioGRID" id="6336">
    <property type="interactions" value="13"/>
</dbReference>
<dbReference type="FunCoup" id="Q9LUT2">
    <property type="interactions" value="2429"/>
</dbReference>
<dbReference type="IntAct" id="Q9LUT2">
    <property type="interactions" value="2"/>
</dbReference>
<dbReference type="MINT" id="Q9LUT2"/>
<dbReference type="STRING" id="3702.Q9LUT2"/>
<dbReference type="iPTMnet" id="Q9LUT2"/>
<dbReference type="SwissPalm" id="Q9LUT2"/>
<dbReference type="PaxDb" id="3702-AT3G17390.1"/>
<dbReference type="ProteomicsDB" id="232239"/>
<dbReference type="EnsemblPlants" id="AT3G17390.1">
    <property type="protein sequence ID" value="AT3G17390.1"/>
    <property type="gene ID" value="AT3G17390"/>
</dbReference>
<dbReference type="GeneID" id="821003"/>
<dbReference type="Gramene" id="AT3G17390.1">
    <property type="protein sequence ID" value="AT3G17390.1"/>
    <property type="gene ID" value="AT3G17390"/>
</dbReference>
<dbReference type="KEGG" id="ath:AT3G17390"/>
<dbReference type="Araport" id="AT3G17390"/>
<dbReference type="TAIR" id="AT3G17390">
    <property type="gene designation" value="MTO3"/>
</dbReference>
<dbReference type="eggNOG" id="KOG1506">
    <property type="taxonomic scope" value="Eukaryota"/>
</dbReference>
<dbReference type="HOGENOM" id="CLU_041802_0_1_1"/>
<dbReference type="InParanoid" id="Q9LUT2"/>
<dbReference type="OMA" id="TVVHTIV"/>
<dbReference type="OrthoDB" id="1502901at2759"/>
<dbReference type="PhylomeDB" id="Q9LUT2"/>
<dbReference type="BioCyc" id="ARA:AT3G17390-MONOMER"/>
<dbReference type="BRENDA" id="2.5.1.6">
    <property type="organism ID" value="399"/>
</dbReference>
<dbReference type="UniPathway" id="UPA00315">
    <property type="reaction ID" value="UER00080"/>
</dbReference>
<dbReference type="CD-CODE" id="4299E36E">
    <property type="entry name" value="Nucleolus"/>
</dbReference>
<dbReference type="PRO" id="PR:Q9LUT2"/>
<dbReference type="Proteomes" id="UP000006548">
    <property type="component" value="Chromosome 3"/>
</dbReference>
<dbReference type="ExpressionAtlas" id="Q9LUT2">
    <property type="expression patterns" value="baseline and differential"/>
</dbReference>
<dbReference type="GO" id="GO:0005829">
    <property type="term" value="C:cytosol"/>
    <property type="evidence" value="ECO:0007005"/>
    <property type="project" value="TAIR"/>
</dbReference>
<dbReference type="GO" id="GO:0005730">
    <property type="term" value="C:nucleolus"/>
    <property type="evidence" value="ECO:0007005"/>
    <property type="project" value="TAIR"/>
</dbReference>
<dbReference type="GO" id="GO:0009505">
    <property type="term" value="C:plant-type cell wall"/>
    <property type="evidence" value="ECO:0007005"/>
    <property type="project" value="TAIR"/>
</dbReference>
<dbReference type="GO" id="GO:0005886">
    <property type="term" value="C:plasma membrane"/>
    <property type="evidence" value="ECO:0007005"/>
    <property type="project" value="TAIR"/>
</dbReference>
<dbReference type="GO" id="GO:0009506">
    <property type="term" value="C:plasmodesma"/>
    <property type="evidence" value="ECO:0007005"/>
    <property type="project" value="TAIR"/>
</dbReference>
<dbReference type="GO" id="GO:0005524">
    <property type="term" value="F:ATP binding"/>
    <property type="evidence" value="ECO:0007669"/>
    <property type="project" value="UniProtKB-KW"/>
</dbReference>
<dbReference type="GO" id="GO:0046872">
    <property type="term" value="F:metal ion binding"/>
    <property type="evidence" value="ECO:0007669"/>
    <property type="project" value="UniProtKB-KW"/>
</dbReference>
<dbReference type="GO" id="GO:0004478">
    <property type="term" value="F:methionine adenosyltransferase activity"/>
    <property type="evidence" value="ECO:0000250"/>
    <property type="project" value="TAIR"/>
</dbReference>
<dbReference type="GO" id="GO:0003729">
    <property type="term" value="F:mRNA binding"/>
    <property type="evidence" value="ECO:0000314"/>
    <property type="project" value="TAIR"/>
</dbReference>
<dbReference type="GO" id="GO:0009809">
    <property type="term" value="P:lignin biosynthetic process"/>
    <property type="evidence" value="ECO:0000315"/>
    <property type="project" value="TAIR"/>
</dbReference>
<dbReference type="GO" id="GO:0006555">
    <property type="term" value="P:methionine metabolic process"/>
    <property type="evidence" value="ECO:0000315"/>
    <property type="project" value="TAIR"/>
</dbReference>
<dbReference type="GO" id="GO:0006730">
    <property type="term" value="P:one-carbon metabolic process"/>
    <property type="evidence" value="ECO:0007669"/>
    <property type="project" value="UniProtKB-KW"/>
</dbReference>
<dbReference type="GO" id="GO:0009409">
    <property type="term" value="P:response to cold"/>
    <property type="evidence" value="ECO:0000270"/>
    <property type="project" value="TAIR"/>
</dbReference>
<dbReference type="GO" id="GO:0006556">
    <property type="term" value="P:S-adenosylmethionine biosynthetic process"/>
    <property type="evidence" value="ECO:0007669"/>
    <property type="project" value="UniProtKB-UniPathway"/>
</dbReference>
<dbReference type="CDD" id="cd18079">
    <property type="entry name" value="S-AdoMet_synt"/>
    <property type="match status" value="1"/>
</dbReference>
<dbReference type="FunFam" id="3.30.300.10:FF:000001">
    <property type="entry name" value="S-adenosylmethionine synthase"/>
    <property type="match status" value="1"/>
</dbReference>
<dbReference type="FunFam" id="3.30.300.10:FF:000003">
    <property type="entry name" value="S-adenosylmethionine synthase"/>
    <property type="match status" value="1"/>
</dbReference>
<dbReference type="FunFam" id="3.30.300.10:FF:000004">
    <property type="entry name" value="S-adenosylmethionine synthase"/>
    <property type="match status" value="1"/>
</dbReference>
<dbReference type="Gene3D" id="3.30.300.10">
    <property type="match status" value="3"/>
</dbReference>
<dbReference type="HAMAP" id="MF_00086">
    <property type="entry name" value="S_AdoMet_synth1"/>
    <property type="match status" value="1"/>
</dbReference>
<dbReference type="InterPro" id="IPR022631">
    <property type="entry name" value="ADOMET_SYNTHASE_CS"/>
</dbReference>
<dbReference type="InterPro" id="IPR022630">
    <property type="entry name" value="S-AdoMet_synt_C"/>
</dbReference>
<dbReference type="InterPro" id="IPR022629">
    <property type="entry name" value="S-AdoMet_synt_central"/>
</dbReference>
<dbReference type="InterPro" id="IPR022628">
    <property type="entry name" value="S-AdoMet_synt_N"/>
</dbReference>
<dbReference type="InterPro" id="IPR002133">
    <property type="entry name" value="S-AdoMet_synthetase"/>
</dbReference>
<dbReference type="InterPro" id="IPR022636">
    <property type="entry name" value="S-AdoMet_synthetase_sfam"/>
</dbReference>
<dbReference type="NCBIfam" id="TIGR01034">
    <property type="entry name" value="metK"/>
    <property type="match status" value="1"/>
</dbReference>
<dbReference type="PANTHER" id="PTHR11964">
    <property type="entry name" value="S-ADENOSYLMETHIONINE SYNTHETASE"/>
    <property type="match status" value="1"/>
</dbReference>
<dbReference type="Pfam" id="PF02773">
    <property type="entry name" value="S-AdoMet_synt_C"/>
    <property type="match status" value="1"/>
</dbReference>
<dbReference type="Pfam" id="PF02772">
    <property type="entry name" value="S-AdoMet_synt_M"/>
    <property type="match status" value="1"/>
</dbReference>
<dbReference type="Pfam" id="PF00438">
    <property type="entry name" value="S-AdoMet_synt_N"/>
    <property type="match status" value="1"/>
</dbReference>
<dbReference type="PIRSF" id="PIRSF000497">
    <property type="entry name" value="MAT"/>
    <property type="match status" value="1"/>
</dbReference>
<dbReference type="SUPFAM" id="SSF55973">
    <property type="entry name" value="S-adenosylmethionine synthetase"/>
    <property type="match status" value="3"/>
</dbReference>
<dbReference type="PROSITE" id="PS00376">
    <property type="entry name" value="ADOMET_SYNTHASE_1"/>
    <property type="match status" value="1"/>
</dbReference>
<dbReference type="PROSITE" id="PS00377">
    <property type="entry name" value="ADOMET_SYNTHASE_2"/>
    <property type="match status" value="1"/>
</dbReference>
<name>METK4_ARATH</name>
<evidence type="ECO:0000250" key="1"/>
<evidence type="ECO:0000250" key="2">
    <source>
        <dbReference type="UniProtKB" id="P0A817"/>
    </source>
</evidence>
<evidence type="ECO:0000250" key="3">
    <source>
        <dbReference type="UniProtKB" id="P13444"/>
    </source>
</evidence>
<evidence type="ECO:0000250" key="4">
    <source>
        <dbReference type="UniProtKB" id="Q00266"/>
    </source>
</evidence>
<evidence type="ECO:0000250" key="5">
    <source>
        <dbReference type="UniProtKB" id="Q96551"/>
    </source>
</evidence>
<evidence type="ECO:0000269" key="6">
    <source>
    </source>
</evidence>
<evidence type="ECO:0000269" key="7">
    <source>
    </source>
</evidence>
<evidence type="ECO:0000269" key="8">
    <source>
    </source>
</evidence>
<evidence type="ECO:0000305" key="9"/>
<reference key="1">
    <citation type="journal article" date="2000" name="DNA Res.">
        <title>Structural analysis of Arabidopsis thaliana chromosome 3. I. Sequence features of the regions of 4,504,864 bp covered by sixty P1 and TAC clones.</title>
        <authorList>
            <person name="Sato S."/>
            <person name="Nakamura Y."/>
            <person name="Kaneko T."/>
            <person name="Katoh T."/>
            <person name="Asamizu E."/>
            <person name="Tabata S."/>
        </authorList>
    </citation>
    <scope>NUCLEOTIDE SEQUENCE [LARGE SCALE GENOMIC DNA]</scope>
    <source>
        <strain>cv. Columbia</strain>
    </source>
</reference>
<reference key="2">
    <citation type="journal article" date="2017" name="Plant J.">
        <title>Araport11: a complete reannotation of the Arabidopsis thaliana reference genome.</title>
        <authorList>
            <person name="Cheng C.Y."/>
            <person name="Krishnakumar V."/>
            <person name="Chan A.P."/>
            <person name="Thibaud-Nissen F."/>
            <person name="Schobel S."/>
            <person name="Town C.D."/>
        </authorList>
    </citation>
    <scope>GENOME REANNOTATION</scope>
    <source>
        <strain>cv. Columbia</strain>
    </source>
</reference>
<reference key="3">
    <citation type="journal article" date="2003" name="Science">
        <title>Empirical analysis of transcriptional activity in the Arabidopsis genome.</title>
        <authorList>
            <person name="Yamada K."/>
            <person name="Lim J."/>
            <person name="Dale J.M."/>
            <person name="Chen H."/>
            <person name="Shinn P."/>
            <person name="Palm C.J."/>
            <person name="Southwick A.M."/>
            <person name="Wu H.C."/>
            <person name="Kim C.J."/>
            <person name="Nguyen M."/>
            <person name="Pham P.K."/>
            <person name="Cheuk R.F."/>
            <person name="Karlin-Newmann G."/>
            <person name="Liu S.X."/>
            <person name="Lam B."/>
            <person name="Sakano H."/>
            <person name="Wu T."/>
            <person name="Yu G."/>
            <person name="Miranda M."/>
            <person name="Quach H.L."/>
            <person name="Tripp M."/>
            <person name="Chang C.H."/>
            <person name="Lee J.M."/>
            <person name="Toriumi M.J."/>
            <person name="Chan M.M."/>
            <person name="Tang C.C."/>
            <person name="Onodera C.S."/>
            <person name="Deng J.M."/>
            <person name="Akiyama K."/>
            <person name="Ansari Y."/>
            <person name="Arakawa T."/>
            <person name="Banh J."/>
            <person name="Banno F."/>
            <person name="Bowser L."/>
            <person name="Brooks S.Y."/>
            <person name="Carninci P."/>
            <person name="Chao Q."/>
            <person name="Choy N."/>
            <person name="Enju A."/>
            <person name="Goldsmith A.D."/>
            <person name="Gurjal M."/>
            <person name="Hansen N.F."/>
            <person name="Hayashizaki Y."/>
            <person name="Johnson-Hopson C."/>
            <person name="Hsuan V.W."/>
            <person name="Iida K."/>
            <person name="Karnes M."/>
            <person name="Khan S."/>
            <person name="Koesema E."/>
            <person name="Ishida J."/>
            <person name="Jiang P.X."/>
            <person name="Jones T."/>
            <person name="Kawai J."/>
            <person name="Kamiya A."/>
            <person name="Meyers C."/>
            <person name="Nakajima M."/>
            <person name="Narusaka M."/>
            <person name="Seki M."/>
            <person name="Sakurai T."/>
            <person name="Satou M."/>
            <person name="Tamse R."/>
            <person name="Vaysberg M."/>
            <person name="Wallender E.K."/>
            <person name="Wong C."/>
            <person name="Yamamura Y."/>
            <person name="Yuan S."/>
            <person name="Shinozaki K."/>
            <person name="Davis R.W."/>
            <person name="Theologis A."/>
            <person name="Ecker J.R."/>
        </authorList>
    </citation>
    <scope>NUCLEOTIDE SEQUENCE [LARGE SCALE MRNA]</scope>
    <source>
        <strain>cv. Columbia</strain>
    </source>
</reference>
<reference key="4">
    <citation type="submission" date="2006-07" db="EMBL/GenBank/DDBJ databases">
        <title>Large-scale analysis of RIKEN Arabidopsis full-length (RAFL) cDNAs.</title>
        <authorList>
            <person name="Totoki Y."/>
            <person name="Seki M."/>
            <person name="Ishida J."/>
            <person name="Nakajima M."/>
            <person name="Enju A."/>
            <person name="Kamiya A."/>
            <person name="Narusaka M."/>
            <person name="Shin-i T."/>
            <person name="Nakagawa M."/>
            <person name="Sakamoto N."/>
            <person name="Oishi K."/>
            <person name="Kohara Y."/>
            <person name="Kobayashi M."/>
            <person name="Toyoda A."/>
            <person name="Sakaki Y."/>
            <person name="Sakurai T."/>
            <person name="Iida K."/>
            <person name="Akiyama K."/>
            <person name="Satou M."/>
            <person name="Toyoda T."/>
            <person name="Konagaya A."/>
            <person name="Carninci P."/>
            <person name="Kawai J."/>
            <person name="Hayashizaki Y."/>
            <person name="Shinozaki K."/>
        </authorList>
    </citation>
    <scope>NUCLEOTIDE SEQUENCE [LARGE SCALE MRNA]</scope>
    <source>
        <strain>cv. Columbia</strain>
    </source>
</reference>
<reference key="5">
    <citation type="submission" date="2002-03" db="EMBL/GenBank/DDBJ databases">
        <title>Full-length cDNA from Arabidopsis thaliana.</title>
        <authorList>
            <person name="Brover V.V."/>
            <person name="Troukhan M.E."/>
            <person name="Alexandrov N.A."/>
            <person name="Lu Y.-P."/>
            <person name="Flavell R.B."/>
            <person name="Feldmann K.A."/>
        </authorList>
    </citation>
    <scope>NUCLEOTIDE SEQUENCE [LARGE SCALE MRNA]</scope>
</reference>
<reference key="6">
    <citation type="journal article" date="2003" name="J. Cell. Biochem.">
        <title>A proteomic study of the Arabidopsis nuclear matrix.</title>
        <authorList>
            <person name="Calikowski T.T."/>
            <person name="Meulia T."/>
            <person name="Meier I."/>
        </authorList>
    </citation>
    <scope>SUBCELLULAR LOCATION</scope>
    <scope>IDENTIFICATION BY MASS SPECTROMETRY</scope>
</reference>
<reference key="7">
    <citation type="journal article" date="2004" name="Phytochemistry">
        <title>Cell-specific protein profiling in Arabidopsis thaliana trichomes: identification of trichome-located proteins involved in sulfur metabolism and detoxification.</title>
        <authorList>
            <person name="Wienkoop S."/>
            <person name="Zoeller D."/>
            <person name="Ebert B."/>
            <person name="Simon-Rosin U."/>
            <person name="Fisahn J."/>
            <person name="Glinski M."/>
            <person name="Weckwerth W."/>
        </authorList>
    </citation>
    <scope>TISSUE SPECIFICITY</scope>
    <scope>IDENTIFICATION BY MASS SPECTROMETRY</scope>
</reference>
<reference key="8">
    <citation type="journal article" date="2006" name="J. Exp. Bot.">
        <title>Proteome analysis of cold stress response in Arabidopsis thaliana using DIGE-technology.</title>
        <authorList>
            <person name="Amme S."/>
            <person name="Matros A."/>
            <person name="Schlesier B."/>
            <person name="Mock H.-P."/>
        </authorList>
    </citation>
    <scope>INDUCTION BY COLD</scope>
    <scope>IDENTIFICATION BY MASS SPECTROMETRY</scope>
</reference>
<reference key="9">
    <citation type="journal article" date="2007" name="Mol. Cell. Proteomics">
        <title>Multidimensional protein identification technology (MudPIT) analysis of ubiquitinated proteins in plants.</title>
        <authorList>
            <person name="Maor R."/>
            <person name="Jones A."/>
            <person name="Nuehse T.S."/>
            <person name="Studholme D.J."/>
            <person name="Peck S.C."/>
            <person name="Shirasu K."/>
        </authorList>
    </citation>
    <scope>IDENTIFICATION BY MASS SPECTROMETRY [LARGE SCALE ANALYSIS]</scope>
    <source>
        <strain>cv. Landsberg erecta</strain>
    </source>
</reference>
<gene>
    <name type="primary">METK4</name>
    <name type="synonym">MTO3</name>
    <name type="synonym">SAMS3</name>
    <name type="ordered locus">At3g17390</name>
    <name type="ORF">MGD8.23</name>
</gene>
<proteinExistence type="evidence at protein level"/>
<protein>
    <recommendedName>
        <fullName>S-adenosylmethionine synthase 4</fullName>
        <shortName>AdoMet synthase 4</shortName>
        <ecNumber evidence="5">2.5.1.6</ecNumber>
    </recommendedName>
    <alternativeName>
        <fullName>Methionine adenosyltransferase 4</fullName>
        <shortName>MAT 4</shortName>
    </alternativeName>
</protein>
<sequence length="393" mass="42796">MESFLFTSESVNEGHPDKLCDQISDAILDACLEQDPESKVACETCTKTNMVMVFGEITTKANVDYEQIVRKTCREIGFVSADVGLDADNCKVLVNIEQQSPDIAQGVHGHLTKKPEEVGAGDQGHMFGYATDETPELMPLTHVLATKLGAKLTEVRKNGTCPWLRPDGKTQVTIEYINESGAMVPVRVHTVLISTQHDETVTNDEIAADLKEHVIKPVIPEKYLDEKTIFHLNPSGRFVIGGPHGDAGLTGRKIIIDTYGGWGAHGGGAFSGKDPTKVDRSGAYIVRQAAKSIVASGLARRVIVQVSYAIGVPEPLSVFVDSYGTGKIPDKEILEIVKESFDFRPGMISINLDLKRGGNGRFLKTAAYGHFGRDDADFTWEVVKPLKSNKVQA</sequence>
<feature type="chain" id="PRO_0000363004" description="S-adenosylmethionine synthase 4">
    <location>
        <begin position="1"/>
        <end position="393"/>
    </location>
</feature>
<feature type="binding site" evidence="3">
    <location>
        <position position="9"/>
    </location>
    <ligand>
        <name>Mg(2+)</name>
        <dbReference type="ChEBI" id="CHEBI:18420"/>
    </ligand>
</feature>
<feature type="binding site" description="in other chain" evidence="4">
    <location>
        <position position="15"/>
    </location>
    <ligand>
        <name>ATP</name>
        <dbReference type="ChEBI" id="CHEBI:30616"/>
        <note>ligand shared between two neighboring subunits</note>
    </ligand>
</feature>
<feature type="binding site" evidence="2">
    <location>
        <position position="43"/>
    </location>
    <ligand>
        <name>K(+)</name>
        <dbReference type="ChEBI" id="CHEBI:29103"/>
    </ligand>
</feature>
<feature type="binding site" description="in other chain" evidence="2">
    <location>
        <position position="56"/>
    </location>
    <ligand>
        <name>L-methionine</name>
        <dbReference type="ChEBI" id="CHEBI:57844"/>
        <note>ligand shared between two neighboring subunits</note>
    </ligand>
</feature>
<feature type="binding site" description="in other chain" evidence="2">
    <location>
        <position position="99"/>
    </location>
    <ligand>
        <name>L-methionine</name>
        <dbReference type="ChEBI" id="CHEBI:57844"/>
        <note>ligand shared between two neighboring subunits</note>
    </ligand>
</feature>
<feature type="binding site" description="in other chain" evidence="4">
    <location>
        <begin position="167"/>
        <end position="169"/>
    </location>
    <ligand>
        <name>ATP</name>
        <dbReference type="ChEBI" id="CHEBI:30616"/>
        <note>ligand shared between two neighboring subunits</note>
    </ligand>
</feature>
<feature type="binding site" description="in other chain" evidence="4">
    <location>
        <begin position="235"/>
        <end position="238"/>
    </location>
    <ligand>
        <name>ATP</name>
        <dbReference type="ChEBI" id="CHEBI:30616"/>
        <note>ligand shared between two neighboring subunits</note>
    </ligand>
</feature>
<feature type="binding site" description="in other chain" evidence="4">
    <location>
        <position position="246"/>
    </location>
    <ligand>
        <name>ATP</name>
        <dbReference type="ChEBI" id="CHEBI:30616"/>
        <note>ligand shared between two neighboring subunits</note>
    </ligand>
</feature>
<feature type="binding site" evidence="2">
    <location>
        <position position="246"/>
    </location>
    <ligand>
        <name>L-methionine</name>
        <dbReference type="ChEBI" id="CHEBI:57844"/>
        <note>ligand shared between two neighboring subunits</note>
    </ligand>
</feature>
<feature type="binding site" description="in other chain" evidence="2">
    <location>
        <begin position="252"/>
        <end position="253"/>
    </location>
    <ligand>
        <name>ATP</name>
        <dbReference type="ChEBI" id="CHEBI:30616"/>
        <note>ligand shared between two neighboring subunits</note>
    </ligand>
</feature>
<feature type="binding site" evidence="2">
    <location>
        <position position="269"/>
    </location>
    <ligand>
        <name>ATP</name>
        <dbReference type="ChEBI" id="CHEBI:30616"/>
        <note>ligand shared between two neighboring subunits</note>
    </ligand>
</feature>
<feature type="binding site" evidence="2">
    <location>
        <position position="273"/>
    </location>
    <ligand>
        <name>ATP</name>
        <dbReference type="ChEBI" id="CHEBI:30616"/>
        <note>ligand shared between two neighboring subunits</note>
    </ligand>
</feature>
<feature type="binding site" evidence="3">
    <location>
        <position position="277"/>
    </location>
    <ligand>
        <name>ATP</name>
        <dbReference type="ChEBI" id="CHEBI:30616"/>
        <note>ligand shared between two neighboring subunits</note>
    </ligand>
</feature>
<feature type="binding site" description="in other chain" evidence="2">
    <location>
        <position position="277"/>
    </location>
    <ligand>
        <name>L-methionine</name>
        <dbReference type="ChEBI" id="CHEBI:57844"/>
        <note>ligand shared between two neighboring subunits</note>
    </ligand>
</feature>
<feature type="sequence conflict" description="In Ref. 4; BAF01944." evidence="9" ref="4">
    <original>D</original>
    <variation>G</variation>
    <location>
        <position position="198"/>
    </location>
</feature>
<comment type="function">
    <text evidence="5">Catalyzes the formation of S-adenosylmethionine from methionine and ATP. The reaction comprises two steps that are both catalyzed by the same enzyme: formation of S-adenosylmethionine (AdoMet) and triphosphate, and subsequent hydrolysis of the triphosphate.</text>
</comment>
<comment type="catalytic activity">
    <reaction evidence="5">
        <text>L-methionine + ATP + H2O = S-adenosyl-L-methionine + phosphate + diphosphate</text>
        <dbReference type="Rhea" id="RHEA:21080"/>
        <dbReference type="ChEBI" id="CHEBI:15377"/>
        <dbReference type="ChEBI" id="CHEBI:30616"/>
        <dbReference type="ChEBI" id="CHEBI:33019"/>
        <dbReference type="ChEBI" id="CHEBI:43474"/>
        <dbReference type="ChEBI" id="CHEBI:57844"/>
        <dbReference type="ChEBI" id="CHEBI:59789"/>
        <dbReference type="EC" id="2.5.1.6"/>
    </reaction>
</comment>
<comment type="cofactor">
    <cofactor evidence="5">
        <name>Mn(2+)</name>
        <dbReference type="ChEBI" id="CHEBI:29035"/>
    </cofactor>
    <cofactor evidence="5">
        <name>Mg(2+)</name>
        <dbReference type="ChEBI" id="CHEBI:18420"/>
    </cofactor>
    <cofactor evidence="5">
        <name>Co(2+)</name>
        <dbReference type="ChEBI" id="CHEBI:48828"/>
    </cofactor>
    <text evidence="3 5">Binds 2 divalent ions per subunit. The metal ions interact primarily with the substrate (By similarity). Can utilize magnesium, manganese or cobalt (in vitro) (By similarity).</text>
</comment>
<comment type="cofactor">
    <cofactor evidence="5">
        <name>K(+)</name>
        <dbReference type="ChEBI" id="CHEBI:29103"/>
    </cofactor>
    <text evidence="3">Binds 1 potassium ion per subunit. The potassium ion interacts primarily with the substrate (By similarity).</text>
</comment>
<comment type="pathway">
    <text evidence="5">Amino-acid biosynthesis; S-adenosyl-L-methionine biosynthesis; S-adenosyl-L-methionine from L-methionine: step 1/1.</text>
</comment>
<comment type="subunit">
    <text evidence="1">Homotetramer.</text>
</comment>
<comment type="subcellular location">
    <subcellularLocation>
        <location evidence="6">Cytoplasm</location>
    </subcellularLocation>
</comment>
<comment type="tissue specificity">
    <text evidence="7">Detected in trichomes (at the protein level).</text>
</comment>
<comment type="induction">
    <text evidence="8">Induced by cold.</text>
</comment>
<comment type="similarity">
    <text evidence="9">Belongs to the AdoMet synthase family.</text>
</comment>
<accession>Q9LUT2</accession>
<accession>Q0WLR3</accession>
<organism>
    <name type="scientific">Arabidopsis thaliana</name>
    <name type="common">Mouse-ear cress</name>
    <dbReference type="NCBI Taxonomy" id="3702"/>
    <lineage>
        <taxon>Eukaryota</taxon>
        <taxon>Viridiplantae</taxon>
        <taxon>Streptophyta</taxon>
        <taxon>Embryophyta</taxon>
        <taxon>Tracheophyta</taxon>
        <taxon>Spermatophyta</taxon>
        <taxon>Magnoliopsida</taxon>
        <taxon>eudicotyledons</taxon>
        <taxon>Gunneridae</taxon>
        <taxon>Pentapetalae</taxon>
        <taxon>rosids</taxon>
        <taxon>malvids</taxon>
        <taxon>Brassicales</taxon>
        <taxon>Brassicaceae</taxon>
        <taxon>Camelineae</taxon>
        <taxon>Arabidopsis</taxon>
    </lineage>
</organism>
<keyword id="KW-0067">ATP-binding</keyword>
<keyword id="KW-0170">Cobalt</keyword>
<keyword id="KW-0963">Cytoplasm</keyword>
<keyword id="KW-0460">Magnesium</keyword>
<keyword id="KW-0479">Metal-binding</keyword>
<keyword id="KW-0547">Nucleotide-binding</keyword>
<keyword id="KW-0554">One-carbon metabolism</keyword>
<keyword id="KW-0630">Potassium</keyword>
<keyword id="KW-1185">Reference proteome</keyword>
<keyword id="KW-0808">Transferase</keyword>